<feature type="chain" id="PRO_0000067027" description="Protein phosphatase 1 regulatory subunit 12A">
    <location>
        <begin position="1"/>
        <end position="1032"/>
    </location>
</feature>
<feature type="repeat" description="ANK 1">
    <location>
        <begin position="39"/>
        <end position="68"/>
    </location>
</feature>
<feature type="repeat" description="ANK 2">
    <location>
        <begin position="72"/>
        <end position="101"/>
    </location>
</feature>
<feature type="repeat" description="ANK 3">
    <location>
        <begin position="105"/>
        <end position="134"/>
    </location>
</feature>
<feature type="repeat" description="ANK 4">
    <location>
        <begin position="138"/>
        <end position="164"/>
    </location>
</feature>
<feature type="repeat" description="ANK 5">
    <location>
        <begin position="198"/>
        <end position="227"/>
    </location>
</feature>
<feature type="repeat" description="ANK 6">
    <location>
        <begin position="231"/>
        <end position="260"/>
    </location>
</feature>
<feature type="region of interest" description="Disordered" evidence="4">
    <location>
        <begin position="290"/>
        <end position="553"/>
    </location>
</feature>
<feature type="region of interest" description="Disordered" evidence="4">
    <location>
        <begin position="588"/>
        <end position="928"/>
    </location>
</feature>
<feature type="region of interest" description="Interaction with ROCK2" evidence="8">
    <location>
        <begin position="683"/>
        <end position="866"/>
    </location>
</feature>
<feature type="short sequence motif" description="KVKF motif">
    <location>
        <begin position="35"/>
        <end position="38"/>
    </location>
</feature>
<feature type="compositionally biased region" description="Basic and acidic residues" evidence="4">
    <location>
        <begin position="291"/>
        <end position="300"/>
    </location>
</feature>
<feature type="compositionally biased region" description="Polar residues" evidence="4">
    <location>
        <begin position="302"/>
        <end position="316"/>
    </location>
</feature>
<feature type="compositionally biased region" description="Basic and acidic residues" evidence="4">
    <location>
        <begin position="318"/>
        <end position="340"/>
    </location>
</feature>
<feature type="compositionally biased region" description="Acidic residues" evidence="4">
    <location>
        <begin position="357"/>
        <end position="369"/>
    </location>
</feature>
<feature type="compositionally biased region" description="Low complexity" evidence="4">
    <location>
        <begin position="383"/>
        <end position="399"/>
    </location>
</feature>
<feature type="compositionally biased region" description="Polar residues" evidence="4">
    <location>
        <begin position="400"/>
        <end position="421"/>
    </location>
</feature>
<feature type="compositionally biased region" description="Basic and acidic residues" evidence="4">
    <location>
        <begin position="422"/>
        <end position="432"/>
    </location>
</feature>
<feature type="compositionally biased region" description="Low complexity" evidence="4">
    <location>
        <begin position="469"/>
        <end position="480"/>
    </location>
</feature>
<feature type="compositionally biased region" description="Basic and acidic residues" evidence="4">
    <location>
        <begin position="481"/>
        <end position="491"/>
    </location>
</feature>
<feature type="compositionally biased region" description="Polar residues" evidence="4">
    <location>
        <begin position="540"/>
        <end position="551"/>
    </location>
</feature>
<feature type="compositionally biased region" description="Polar residues" evidence="4">
    <location>
        <begin position="602"/>
        <end position="612"/>
    </location>
</feature>
<feature type="compositionally biased region" description="Basic and acidic residues" evidence="4">
    <location>
        <begin position="614"/>
        <end position="625"/>
    </location>
</feature>
<feature type="compositionally biased region" description="Low complexity" evidence="4">
    <location>
        <begin position="633"/>
        <end position="661"/>
    </location>
</feature>
<feature type="compositionally biased region" description="Basic and acidic residues" evidence="4">
    <location>
        <begin position="674"/>
        <end position="683"/>
    </location>
</feature>
<feature type="compositionally biased region" description="Basic residues" evidence="4">
    <location>
        <begin position="684"/>
        <end position="694"/>
    </location>
</feature>
<feature type="compositionally biased region" description="Basic and acidic residues" evidence="4">
    <location>
        <begin position="719"/>
        <end position="768"/>
    </location>
</feature>
<feature type="compositionally biased region" description="Low complexity" evidence="4">
    <location>
        <begin position="774"/>
        <end position="797"/>
    </location>
</feature>
<feature type="compositionally biased region" description="Polar residues" evidence="4">
    <location>
        <begin position="798"/>
        <end position="812"/>
    </location>
</feature>
<feature type="compositionally biased region" description="Basic and acidic residues" evidence="4">
    <location>
        <begin position="816"/>
        <end position="842"/>
    </location>
</feature>
<feature type="compositionally biased region" description="Basic residues" evidence="4">
    <location>
        <begin position="843"/>
        <end position="854"/>
    </location>
</feature>
<feature type="compositionally biased region" description="Basic and acidic residues" evidence="4">
    <location>
        <begin position="869"/>
        <end position="885"/>
    </location>
</feature>
<feature type="compositionally biased region" description="Low complexity" evidence="4">
    <location>
        <begin position="886"/>
        <end position="900"/>
    </location>
</feature>
<feature type="compositionally biased region" description="Basic and acidic residues" evidence="4">
    <location>
        <begin position="916"/>
        <end position="928"/>
    </location>
</feature>
<feature type="modified residue" description="(3S)-3-hydroxyasparagine; by HIF1AN" evidence="1">
    <location>
        <position position="67"/>
    </location>
</feature>
<feature type="modified residue" description="(3S)-3-hydroxyasparagine; by HIF1AN" evidence="1">
    <location>
        <position position="100"/>
    </location>
</feature>
<feature type="modified residue" description="(3S)-3-hydroxyasparagine; by HIF1AN" evidence="1">
    <location>
        <position position="226"/>
    </location>
</feature>
<feature type="modified residue" description="Phosphoserine" evidence="15">
    <location>
        <position position="299"/>
    </location>
</feature>
<feature type="modified residue" description="Phosphoserine" evidence="2">
    <location>
        <position position="422"/>
    </location>
</feature>
<feature type="modified residue" description="Phosphoserine" evidence="2">
    <location>
        <position position="432"/>
    </location>
</feature>
<feature type="modified residue" description="Phosphothreonine" evidence="2">
    <location>
        <position position="443"/>
    </location>
</feature>
<feature type="modified residue" description="Phosphoserine" evidence="15">
    <location>
        <position position="445"/>
    </location>
</feature>
<feature type="modified residue" description="Phosphotyrosine" evidence="2">
    <location>
        <position position="446"/>
    </location>
</feature>
<feature type="modified residue" description="Phosphoserine; by NUAK1" evidence="2">
    <location>
        <position position="472"/>
    </location>
</feature>
<feature type="modified residue" description="Phosphoserine; by CDK1" evidence="2">
    <location>
        <position position="473"/>
    </location>
</feature>
<feature type="modified residue" description="Phosphoserine" evidence="2">
    <location>
        <position position="477"/>
    </location>
</feature>
<feature type="modified residue" description="Phosphoserine" evidence="15">
    <location>
        <position position="507"/>
    </location>
</feature>
<feature type="modified residue" description="Phosphoserine" evidence="2">
    <location>
        <position position="509"/>
    </location>
</feature>
<feature type="modified residue" description="Phosphoserine" evidence="2">
    <location>
        <position position="601"/>
    </location>
</feature>
<feature type="modified residue" description="Phosphoserine" evidence="2">
    <location>
        <position position="618"/>
    </location>
</feature>
<feature type="modified residue" description="Phosphoserine; by PKA and PKG; in vitro" evidence="2">
    <location>
        <position position="693"/>
    </location>
</feature>
<feature type="modified residue" description="Phosphoserine; by PKA and PKG; in vitro" evidence="2">
    <location>
        <position position="696"/>
    </location>
</feature>
<feature type="modified residue" description="Phosphothreonine; by ROCK1, ROCK2, CDC42BP, ZIPK/DAPK3 and RAF1" evidence="5 7">
    <location>
        <position position="697"/>
    </location>
</feature>
<feature type="modified residue" description="Phosphoserine" evidence="3">
    <location>
        <position position="804"/>
    </location>
</feature>
<feature type="modified residue" description="Phosphoserine; by ROCK2" evidence="5">
    <location>
        <position position="854"/>
    </location>
</feature>
<feature type="modified residue" description="Phosphoserine" evidence="15">
    <location>
        <position position="864"/>
    </location>
</feature>
<feature type="modified residue" description="Phosphoserine" evidence="15">
    <location>
        <position position="873"/>
    </location>
</feature>
<feature type="modified residue" description="Phosphoserine" evidence="2">
    <location>
        <position position="905"/>
    </location>
</feature>
<feature type="modified residue" description="Phosphoserine" evidence="2">
    <location>
        <position position="910"/>
    </location>
</feature>
<feature type="modified residue" description="Phosphoserine; by NUAK1" evidence="12 15">
    <location>
        <position position="912"/>
    </location>
</feature>
<feature type="modified residue" description="Phosphoserine" evidence="14 15">
    <location>
        <position position="997"/>
    </location>
</feature>
<feature type="splice variant" id="VSP_009255" description="In isoform 3." evidence="10">
    <location>
        <begin position="552"/>
        <end position="607"/>
    </location>
</feature>
<feature type="splice variant" id="VSP_009254" description="In isoform 2." evidence="11">
    <location>
        <begin position="608"/>
        <end position="667"/>
    </location>
</feature>
<feature type="sequence conflict" description="In Ref. 2; AAA92961." evidence="12" ref="2">
    <original>N</original>
    <variation>R</variation>
    <location>
        <position position="11"/>
    </location>
</feature>
<feature type="sequence conflict" description="In Ref. 2; AAA92961." evidence="12" ref="2">
    <original>T</original>
    <variation>N</variation>
    <location>
        <position position="316"/>
    </location>
</feature>
<feature type="sequence conflict" description="In Ref. 2; AAA92961." evidence="12" ref="2">
    <original>K</original>
    <variation>E</variation>
    <location>
        <position position="424"/>
    </location>
</feature>
<feature type="sequence conflict" description="In Ref. 2; AAA92961." evidence="12" ref="2">
    <original>A</original>
    <variation>P</variation>
    <location>
        <position position="579"/>
    </location>
</feature>
<feature type="sequence conflict" description="In Ref. 2; AAA92961." evidence="12" ref="2">
    <original>Q</original>
    <variation>H</variation>
    <location>
        <position position="682"/>
    </location>
</feature>
<keyword id="KW-0025">Alternative splicing</keyword>
<keyword id="KW-0040">ANK repeat</keyword>
<keyword id="KW-0963">Cytoplasm</keyword>
<keyword id="KW-0206">Cytoskeleton</keyword>
<keyword id="KW-0379">Hydroxylation</keyword>
<keyword id="KW-0597">Phosphoprotein</keyword>
<keyword id="KW-1185">Reference proteome</keyword>
<keyword id="KW-0677">Repeat</keyword>
<name>MYPT1_RAT</name>
<proteinExistence type="evidence at protein level"/>
<sequence length="1032" mass="115283">MKMADAKQKRNEQLKRWIGSETDLEPPVVKRQKTKVKFDDGAVFLAACSSGDTDEVLKLLHRGADINYANVDGLTALHQACIDDNVDMVKFLVENGANINQPDNEGWIPLHAAASCGYLDIAEFLIGQGAHVGAVNSEGDTPLDIAEEEAMEELLQNEVNRQGVDIEAARKEEERIMLRDARQWLNSGHISDVRHAKSGGTALHVAAAKGYTEVLKLLIQAGYDVNIKDYDGWTPLHAAAHWGKEEACRILVDNLCDMETVNKVGQTAFDVADEDILGYLEELQKKQNLLHSEKRDKKSPLIESTANMENNQPQKTFKNKETLIIEPEKNASRIESLEQEKADEEEEGKKDESSCSSEEDEEDDSESEAETDKTKPMASVTNAHTASTQAAPAAVTTPTLSSNQGTPTSPVKKFPTSTTKISPKEEERKDESPASWRLGLRKTGSYGALAEITASKEAQKEKDTAGVIRSASSPRLSSSLDNKEKEKDNKGTRLAYVAPTIPRRLGSTSDIEEKENRESSNLRTSSSYTRRKWEDDLKKNSSINEGSTYHRSCSFGRRQDDLISCSVPSTTSTPTVTSAAGLQKSFLSSTSTTAKTPPGSSPAGTQSSTSNRLWAEDSTEKEKDSAPTAATILVAPTVVSAAASSTTALTTTTAGTLSSTSEVRERRRSYLTPVRDEESESQRKARSRQARQSRRSTQGVTLTDLQEAEKTIGRSRSTRTREQENEEKDKEEKEKQDKEKQEEKKESEVSREDEYKQKYSRTYDETYARYRPVSTSSSSTPSSSSLSTLGSSLYASSQLNRPNSLVGITSAYSRGLTKDNEREGEKKEEEKEGEDKSQPKSIRERRRPREKRRSTGVSFWTQDSDENEQERQSDTEDGSSKRDTQTDSVSRYDSSSTSSSDRYDSLLGRSASYSYLEERKPYGSRLEKDDSTDFKKLYEQILAENEKLKAQLHDTNMELTDLKLQLEKATQRQERFADRSLLEMEKRERRALERRISEMEEELKMLPDLKADNQRLKDENGALIRVISKLSK</sequence>
<accession>Q10728</accession>
<accession>Q62937</accession>
<accession>Q9WU33</accession>
<gene>
    <name evidence="13" type="primary">Ppp1r12a</name>
    <name type="synonym">Mbs</name>
    <name evidence="12" type="synonym">Mypt1</name>
</gene>
<evidence type="ECO:0000250" key="1"/>
<evidence type="ECO:0000250" key="2">
    <source>
        <dbReference type="UniProtKB" id="O14974"/>
    </source>
</evidence>
<evidence type="ECO:0000250" key="3">
    <source>
        <dbReference type="UniProtKB" id="Q9DBR7"/>
    </source>
</evidence>
<evidence type="ECO:0000256" key="4">
    <source>
        <dbReference type="SAM" id="MobiDB-lite"/>
    </source>
</evidence>
<evidence type="ECO:0000269" key="5">
    <source>
    </source>
</evidence>
<evidence type="ECO:0000269" key="6">
    <source>
    </source>
</evidence>
<evidence type="ECO:0000269" key="7">
    <source>
    </source>
</evidence>
<evidence type="ECO:0000269" key="8">
    <source>
    </source>
</evidence>
<evidence type="ECO:0000269" key="9">
    <source>
    </source>
</evidence>
<evidence type="ECO:0000303" key="10">
    <source>
    </source>
</evidence>
<evidence type="ECO:0000303" key="11">
    <source>
    </source>
</evidence>
<evidence type="ECO:0000305" key="12"/>
<evidence type="ECO:0000312" key="13">
    <source>
        <dbReference type="RGD" id="620013"/>
    </source>
</evidence>
<evidence type="ECO:0007744" key="14">
    <source>
    </source>
</evidence>
<evidence type="ECO:0007744" key="15">
    <source>
    </source>
</evidence>
<comment type="function">
    <text evidence="2 9">Key regulator of protein phosphatase 1C (PPP1C). Mediates binding to myosin. As part of the PPP1C complex, involved in dephosphorylation of PLK1. Capable of inhibiting HIF1AN-dependent suppression of HIF1A activity (By similarity).</text>
</comment>
<comment type="subunit">
    <text evidence="2 3">PP1 comprises a catalytic subunit, PPP1CA, PPP1CB or PPP1CC, and one or several targeting or regulatory subunits. PPP1R12A mediates binding to myosin. Interacts with ARHA and CIT (By similarity). Binds PPP1R12B, ROCK1 and IL16. Interacts directly with PRKG1. Non-covalent dimer of 2 dimers; PRKG1-PRKG1 and PPP1R12A-PPP1R12A. Interacts with SMTNL1 (By similarity). Interacts with PPP1CB; the interaction is direct. Interacts (when phosphorylated at Ser-445, Ser-472 and Ser-910) with 14-3-3. Interacts with ROCK1 and ROCK2. Interacts with isoform 1 and isoform 2 of ZIPK/DAPK3. Interacts with RAF1. Interacts with HIF1AN (By similarity). Interacts with NCKAP1L (By similarity).</text>
</comment>
<comment type="interaction">
    <interactant intactId="EBI-918263">
        <id>Q10728</id>
    </interactant>
    <interactant intactId="EBI-9691390">
        <id>O43293-2</id>
        <label>DAPK3</label>
    </interactant>
    <organismsDiffer>true</organismsDiffer>
    <experiments>2</experiments>
</comment>
<comment type="interaction">
    <interactant intactId="EBI-918263">
        <id>Q10728</id>
    </interactant>
    <interactant intactId="EBI-1022605">
        <id>Q6WCQ1</id>
        <label>MPRIP</label>
    </interactant>
    <organismsDiffer>true</organismsDiffer>
    <experiments>6</experiments>
</comment>
<comment type="interaction">
    <interactant intactId="EBI-918263">
        <id>Q10728</id>
    </interactant>
    <interactant intactId="EBI-1014472">
        <id>P35240</id>
        <label>NF2</label>
    </interactant>
    <organismsDiffer>true</organismsDiffer>
    <experiments>2</experiments>
</comment>
<comment type="subcellular location">
    <subcellularLocation>
        <location evidence="2">Cytoplasm</location>
    </subcellularLocation>
    <subcellularLocation>
        <location evidence="2">Cytoplasm</location>
        <location evidence="2">Cytoskeleton</location>
        <location evidence="2">Stress fiber</location>
    </subcellularLocation>
    <text evidence="2">Also along actomyosin filaments.</text>
</comment>
<comment type="alternative products">
    <event type="alternative splicing"/>
    <isoform>
        <id>Q10728-1</id>
        <name>1</name>
        <sequence type="displayed"/>
    </isoform>
    <isoform>
        <id>Q10728-2</id>
        <name>2</name>
        <sequence type="described" ref="VSP_009254"/>
    </isoform>
    <isoform>
        <id>Q10728-3</id>
        <name>3</name>
        <sequence type="described" ref="VSP_009255"/>
    </isoform>
    <text>Additional isoforms seem to exist.</text>
</comment>
<comment type="tissue specificity">
    <text evidence="6">Smooth muscle. Detected in aorta, portal vein, stomach, intestine, bladder and lung.</text>
</comment>
<comment type="domain">
    <text evidence="1">Heterotetramerization is mediated by the interaction between a coiled-coil of PRKG1 and the leucine/isoleucine zipper of PPP1R12A/MBS, the myosin-binding subunit of the myosin phosphatase.</text>
</comment>
<comment type="domain">
    <text evidence="2">The KVKF motif mediates interaction with PPP1CB.</text>
</comment>
<comment type="PTM">
    <text evidence="2">Phosphorylated on upon DNA damage, probably by ATM or ATR (By similarity). Phosphorylated by CIT (Rho-associated kinase). Phosphorylated cooperatively by ROCK1 and CDC42BP on Thr-697. In vitro, phosphorylation of Ser-696 by PKA and PKG appears to prevent phosphorylation of the inhibitory site Thr-697, probably mediated by PRKG1 (By similarity). May be phosphorylated at Thr-697 by DMPK; may inhibit the myosin phosphatase activity. Phosphorylated at Ser-473 by CDK1 during mitosis, creating docking sites for the POLO box domains of PLK1. Subsequently, PLK1 binds and phosphorylates PPP1R12A (By similarity).</text>
</comment>
<organism>
    <name type="scientific">Rattus norvegicus</name>
    <name type="common">Rat</name>
    <dbReference type="NCBI Taxonomy" id="10116"/>
    <lineage>
        <taxon>Eukaryota</taxon>
        <taxon>Metazoa</taxon>
        <taxon>Chordata</taxon>
        <taxon>Craniata</taxon>
        <taxon>Vertebrata</taxon>
        <taxon>Euteleostomi</taxon>
        <taxon>Mammalia</taxon>
        <taxon>Eutheria</taxon>
        <taxon>Euarchontoglires</taxon>
        <taxon>Glires</taxon>
        <taxon>Rodentia</taxon>
        <taxon>Myomorpha</taxon>
        <taxon>Muroidea</taxon>
        <taxon>Muridae</taxon>
        <taxon>Murinae</taxon>
        <taxon>Rattus</taxon>
    </lineage>
</organism>
<reference key="1">
    <citation type="journal article" date="1994" name="FEBS Lett.">
        <title>Molecular cloning of cDNA encoding the 110 kDa and 21 kDa regulatory subunits of smooth muscle protein phosphatase 1M.</title>
        <authorList>
            <person name="Chen Y.H."/>
            <person name="Chen M.X."/>
            <person name="Alessi D.R."/>
            <person name="Campbell D.G."/>
            <person name="Shanahan C."/>
            <person name="Cohen P."/>
            <person name="Cohen P.T.W."/>
        </authorList>
    </citation>
    <scope>NUCLEOTIDE SEQUENCE [MRNA] (ISOFORM 3)</scope>
    <source>
        <tissue>Aorta</tissue>
    </source>
</reference>
<reference key="2">
    <citation type="journal article" date="1995" name="FEBS Lett.">
        <title>Molecular cloning and functional expression of a recombinant 72.5 kDa fragment of the 110 kDa regulatory subunit of smooth muscle protein phosphatase 1M.</title>
        <authorList>
            <person name="Haystead C.M.M."/>
            <person name="Gailly P."/>
            <person name="Somlyo A.P."/>
            <person name="Somlyo A.V."/>
            <person name="Haystead T.A.J."/>
        </authorList>
    </citation>
    <scope>NUCLEOTIDE SEQUENCE [MRNA] OF 11-728 (ISOFORM 2)</scope>
    <scope>FUNCTION</scope>
    <source>
        <strain>Wistar</strain>
        <tissue>Kidney</tissue>
    </source>
</reference>
<reference key="3">
    <citation type="journal article" date="2000" name="Am. J. Physiol.">
        <title>A myosin phosphatase targeting subunit isoform transition defines a smooth muscle developmental phenotypic switch.</title>
        <authorList>
            <person name="Dirksen W.P."/>
            <person name="Vladic F."/>
            <person name="Fisher S.A."/>
        </authorList>
    </citation>
    <scope>NUCLEOTIDE SEQUENCE [GENOMIC DNA] OF 490-665 (ISOFORM 1)</scope>
    <scope>TISSUE SPECIFICITY</scope>
    <scope>ALTERNATIVE SPLICING</scope>
    <source>
        <strain>Sprague-Dawley</strain>
    </source>
</reference>
<reference key="4">
    <citation type="journal article" date="1996" name="Science">
        <title>Regulation of myosin phosphatase by Rho and Rho-associated kinase (Rho-kinase).</title>
        <authorList>
            <person name="Kimura K."/>
            <person name="Ito M."/>
            <person name="Amano M."/>
            <person name="Chihara K."/>
            <person name="Fukata Y."/>
            <person name="Nakafuku M."/>
            <person name="Yamamori B."/>
            <person name="Feng J."/>
            <person name="Nakano T."/>
            <person name="Okawa K."/>
            <person name="Iwamatsu A."/>
            <person name="Kaibuchi K."/>
        </authorList>
    </citation>
    <scope>PHOSPHORYLATION</scope>
    <scope>INTERACTION WITH ARHA AND CIT</scope>
</reference>
<reference key="5">
    <citation type="journal article" date="1999" name="J. Cell Biol.">
        <title>Phosphorylation of myosin-binding subunit (MBS) of myosin phosphatase by Rho-kinase in vivo.</title>
        <authorList>
            <person name="Kawano Y."/>
            <person name="Fukata Y."/>
            <person name="Oshiro N."/>
            <person name="Amano M."/>
            <person name="Nakamura T."/>
            <person name="Ito M."/>
            <person name="Matsumura F."/>
            <person name="Inagaki M."/>
            <person name="Kaibuchi K."/>
        </authorList>
    </citation>
    <scope>PHOSPHORYLATION AT THR-697 AND SER-854</scope>
    <scope>INTERACTION WITH ROCK1</scope>
</reference>
<reference key="6">
    <citation type="journal article" date="2001" name="J. Biol. Chem.">
        <title>Zipper-interacting protein kinase induces Ca(2+)-free smooth muscle contraction via myosin light chain phosphorylation.</title>
        <authorList>
            <person name="Niiro N."/>
            <person name="Ikebe M."/>
        </authorList>
    </citation>
    <scope>PHOSPHORYLATION AT THR-697 BY ZIPK/DAPK3</scope>
</reference>
<reference key="7">
    <citation type="journal article" date="2006" name="Proc. Natl. Acad. Sci. U.S.A.">
        <title>Quantitative phosphoproteomics of vasopressin-sensitive renal cells: regulation of aquaporin-2 phosphorylation at two sites.</title>
        <authorList>
            <person name="Hoffert J.D."/>
            <person name="Pisitkun T."/>
            <person name="Wang G."/>
            <person name="Shen R.-F."/>
            <person name="Knepper M.A."/>
        </authorList>
    </citation>
    <scope>PHOSPHORYLATION [LARGE SCALE ANALYSIS] AT SER-997</scope>
    <scope>IDENTIFICATION BY MASS SPECTROMETRY [LARGE SCALE ANALYSIS]</scope>
</reference>
<reference key="8">
    <citation type="journal article" date="2009" name="Circ. Res.">
        <title>ROCK isoform regulation of myosin phosphatase and contractility in vascular smooth muscle cells.</title>
        <authorList>
            <person name="Wang Y."/>
            <person name="Zheng X.R."/>
            <person name="Riddick N."/>
            <person name="Bryden M."/>
            <person name="Baur W."/>
            <person name="Zhang X."/>
            <person name="Surks H.K."/>
        </authorList>
    </citation>
    <scope>PHOSPHORYLATION</scope>
    <scope>INTERACTION WITH ROCK1 AND ROCK2</scope>
</reference>
<reference key="9">
    <citation type="journal article" date="2012" name="Nat. Commun.">
        <title>Quantitative maps of protein phosphorylation sites across 14 different rat organs and tissues.</title>
        <authorList>
            <person name="Lundby A."/>
            <person name="Secher A."/>
            <person name="Lage K."/>
            <person name="Nordsborg N.B."/>
            <person name="Dmytriyev A."/>
            <person name="Lundby C."/>
            <person name="Olsen J.V."/>
        </authorList>
    </citation>
    <scope>PHOSPHORYLATION [LARGE SCALE ANALYSIS] AT SER-299; SER-445; SER-507; SER-864; SER-873; SER-912 AND SER-997</scope>
    <scope>IDENTIFICATION BY MASS SPECTROMETRY [LARGE SCALE ANALYSIS]</scope>
</reference>
<protein>
    <recommendedName>
        <fullName>Protein phosphatase 1 regulatory subunit 12A</fullName>
    </recommendedName>
    <alternativeName>
        <fullName>MBSP</fullName>
    </alternativeName>
    <alternativeName>
        <fullName>Myosin phosphatase-targeting subunit 1</fullName>
        <shortName>Myosin phosphatase target subunit 1</shortName>
    </alternativeName>
    <alternativeName>
        <fullName>Protein phosphatase myosin-binding subunit</fullName>
    </alternativeName>
    <alternativeName>
        <fullName>Protein phosphatase subunit 1M</fullName>
        <shortName>PP-1M</shortName>
    </alternativeName>
    <alternativeName>
        <fullName>Serine/threonine protein phosphatase PP1 smooth muscle regulatory subunit M110</fullName>
    </alternativeName>
</protein>
<dbReference type="EMBL" id="S74907">
    <property type="protein sequence ID" value="AAB32731.1"/>
    <property type="molecule type" value="mRNA"/>
</dbReference>
<dbReference type="EMBL" id="U50185">
    <property type="protein sequence ID" value="AAA92961.1"/>
    <property type="molecule type" value="mRNA"/>
</dbReference>
<dbReference type="EMBL" id="AF110176">
    <property type="protein sequence ID" value="AAD34326.1"/>
    <property type="molecule type" value="Genomic_DNA"/>
</dbReference>
<dbReference type="PIR" id="S68418">
    <property type="entry name" value="S68418"/>
</dbReference>
<dbReference type="RefSeq" id="NP_446342.1">
    <property type="nucleotide sequence ID" value="NM_053890.1"/>
</dbReference>
<dbReference type="RefSeq" id="XP_006241377.1">
    <molecule id="Q10728-2"/>
    <property type="nucleotide sequence ID" value="XM_006241315.3"/>
</dbReference>
<dbReference type="BMRB" id="Q10728"/>
<dbReference type="SMR" id="Q10728"/>
<dbReference type="BioGRID" id="250554">
    <property type="interactions" value="1"/>
</dbReference>
<dbReference type="FunCoup" id="Q10728">
    <property type="interactions" value="4081"/>
</dbReference>
<dbReference type="IntAct" id="Q10728">
    <property type="interactions" value="5"/>
</dbReference>
<dbReference type="MINT" id="Q10728"/>
<dbReference type="STRING" id="10116.ENSRNOP00000069900"/>
<dbReference type="ChEMBL" id="CHEMBL5169148"/>
<dbReference type="GlyGen" id="Q10728">
    <property type="glycosylation" value="2 sites, 1 O-linked glycan (1 site)"/>
</dbReference>
<dbReference type="iPTMnet" id="Q10728"/>
<dbReference type="PhosphoSitePlus" id="Q10728"/>
<dbReference type="jPOST" id="Q10728"/>
<dbReference type="PaxDb" id="10116-ENSRNOP00000006773"/>
<dbReference type="Ensembl" id="ENSRNOT00000041473.6">
    <molecule id="Q10728-2"/>
    <property type="protein sequence ID" value="ENSRNOP00000045260.5"/>
    <property type="gene ID" value="ENSRNOG00000004925.9"/>
</dbReference>
<dbReference type="GeneID" id="116670"/>
<dbReference type="KEGG" id="rno:116670"/>
<dbReference type="UCSC" id="RGD:620013">
    <molecule id="Q10728-1"/>
    <property type="organism name" value="rat"/>
</dbReference>
<dbReference type="AGR" id="RGD:620013"/>
<dbReference type="CTD" id="4659"/>
<dbReference type="RGD" id="620013">
    <property type="gene designation" value="Ppp1r12a"/>
</dbReference>
<dbReference type="eggNOG" id="KOG0505">
    <property type="taxonomic scope" value="Eukaryota"/>
</dbReference>
<dbReference type="GeneTree" id="ENSGT00940000156120"/>
<dbReference type="InParanoid" id="Q10728"/>
<dbReference type="OrthoDB" id="539213at2759"/>
<dbReference type="PhylomeDB" id="Q10728"/>
<dbReference type="BRENDA" id="3.1.3.53">
    <property type="organism ID" value="5301"/>
</dbReference>
<dbReference type="Reactome" id="R-RNO-2565942">
    <property type="pathway name" value="Regulation of PLK1 Activity at G2/M Transition"/>
</dbReference>
<dbReference type="Reactome" id="R-RNO-5625740">
    <property type="pathway name" value="RHO GTPases activate PKNs"/>
</dbReference>
<dbReference type="Reactome" id="R-RNO-5627123">
    <property type="pathway name" value="RHO GTPases activate PAKs"/>
</dbReference>
<dbReference type="PRO" id="PR:Q10728"/>
<dbReference type="Proteomes" id="UP000002494">
    <property type="component" value="Chromosome 7"/>
</dbReference>
<dbReference type="GO" id="GO:0031672">
    <property type="term" value="C:A band"/>
    <property type="evidence" value="ECO:0000250"/>
    <property type="project" value="UniProtKB"/>
</dbReference>
<dbReference type="GO" id="GO:0005813">
    <property type="term" value="C:centrosome"/>
    <property type="evidence" value="ECO:0000250"/>
    <property type="project" value="UniProtKB"/>
</dbReference>
<dbReference type="GO" id="GO:0043292">
    <property type="term" value="C:contractile muscle fiber"/>
    <property type="evidence" value="ECO:0000266"/>
    <property type="project" value="RGD"/>
</dbReference>
<dbReference type="GO" id="GO:0005737">
    <property type="term" value="C:cytoplasm"/>
    <property type="evidence" value="ECO:0000318"/>
    <property type="project" value="GO_Central"/>
</dbReference>
<dbReference type="GO" id="GO:0005829">
    <property type="term" value="C:cytosol"/>
    <property type="evidence" value="ECO:0000304"/>
    <property type="project" value="Reactome"/>
</dbReference>
<dbReference type="GO" id="GO:0000776">
    <property type="term" value="C:kinetochore"/>
    <property type="evidence" value="ECO:0000250"/>
    <property type="project" value="UniProtKB"/>
</dbReference>
<dbReference type="GO" id="GO:0072357">
    <property type="term" value="C:PTW/PP1 phosphatase complex"/>
    <property type="evidence" value="ECO:0000250"/>
    <property type="project" value="UniProtKB"/>
</dbReference>
<dbReference type="GO" id="GO:0001725">
    <property type="term" value="C:stress fiber"/>
    <property type="evidence" value="ECO:0007669"/>
    <property type="project" value="UniProtKB-SubCell"/>
</dbReference>
<dbReference type="GO" id="GO:0030018">
    <property type="term" value="C:Z disc"/>
    <property type="evidence" value="ECO:0000250"/>
    <property type="project" value="UniProtKB"/>
</dbReference>
<dbReference type="GO" id="GO:0071889">
    <property type="term" value="F:14-3-3 protein binding"/>
    <property type="evidence" value="ECO:0000250"/>
    <property type="project" value="UniProtKB"/>
</dbReference>
<dbReference type="GO" id="GO:0004857">
    <property type="term" value="F:enzyme inhibitor activity"/>
    <property type="evidence" value="ECO:0000250"/>
    <property type="project" value="UniProtKB"/>
</dbReference>
<dbReference type="GO" id="GO:0017020">
    <property type="term" value="F:myosin phosphatase regulator activity"/>
    <property type="evidence" value="ECO:0000318"/>
    <property type="project" value="GO_Central"/>
</dbReference>
<dbReference type="GO" id="GO:0019208">
    <property type="term" value="F:phosphatase regulator activity"/>
    <property type="evidence" value="ECO:0000250"/>
    <property type="project" value="UniProtKB"/>
</dbReference>
<dbReference type="GO" id="GO:0004721">
    <property type="term" value="F:phosphoprotein phosphatase activity"/>
    <property type="evidence" value="ECO:0000314"/>
    <property type="project" value="RGD"/>
</dbReference>
<dbReference type="GO" id="GO:0019901">
    <property type="term" value="F:protein kinase binding"/>
    <property type="evidence" value="ECO:0000266"/>
    <property type="project" value="RGD"/>
</dbReference>
<dbReference type="GO" id="GO:0071466">
    <property type="term" value="P:cellular response to xenobiotic stimulus"/>
    <property type="evidence" value="ECO:0000266"/>
    <property type="project" value="RGD"/>
</dbReference>
<dbReference type="GO" id="GO:0007098">
    <property type="term" value="P:centrosome cycle"/>
    <property type="evidence" value="ECO:0000250"/>
    <property type="project" value="UniProtKB"/>
</dbReference>
<dbReference type="GO" id="GO:0000278">
    <property type="term" value="P:mitotic cell cycle"/>
    <property type="evidence" value="ECO:0000250"/>
    <property type="project" value="UniProtKB"/>
</dbReference>
<dbReference type="GO" id="GO:0043086">
    <property type="term" value="P:negative regulation of catalytic activity"/>
    <property type="evidence" value="ECO:0000250"/>
    <property type="project" value="UniProtKB"/>
</dbReference>
<dbReference type="GO" id="GO:0048812">
    <property type="term" value="P:neuron projection morphogenesis"/>
    <property type="evidence" value="ECO:0000318"/>
    <property type="project" value="GO_Central"/>
</dbReference>
<dbReference type="GO" id="GO:0045944">
    <property type="term" value="P:positive regulation of transcription by RNA polymerase II"/>
    <property type="evidence" value="ECO:0000250"/>
    <property type="project" value="UniProtKB"/>
</dbReference>
<dbReference type="GO" id="GO:0006470">
    <property type="term" value="P:protein dephosphorylation"/>
    <property type="evidence" value="ECO:0000250"/>
    <property type="project" value="UniProtKB"/>
</dbReference>
<dbReference type="GO" id="GO:0030155">
    <property type="term" value="P:regulation of cell adhesion"/>
    <property type="evidence" value="ECO:0000250"/>
    <property type="project" value="UniProtKB"/>
</dbReference>
<dbReference type="GO" id="GO:0046822">
    <property type="term" value="P:regulation of nucleocytoplasmic transport"/>
    <property type="evidence" value="ECO:0000266"/>
    <property type="project" value="RGD"/>
</dbReference>
<dbReference type="GO" id="GO:0007165">
    <property type="term" value="P:signal transduction"/>
    <property type="evidence" value="ECO:0007669"/>
    <property type="project" value="InterPro"/>
</dbReference>
<dbReference type="CDD" id="cd21944">
    <property type="entry name" value="IPD_MYPT1"/>
    <property type="match status" value="1"/>
</dbReference>
<dbReference type="FunFam" id="1.25.40.20:FF:000004">
    <property type="entry name" value="Phosphatase 1 regulatory subunit 12A"/>
    <property type="match status" value="1"/>
</dbReference>
<dbReference type="FunFam" id="1.25.40.20:FF:000876">
    <property type="entry name" value="Protein phosphatase 1 regulatory subunit 12A"/>
    <property type="match status" value="1"/>
</dbReference>
<dbReference type="Gene3D" id="6.10.140.390">
    <property type="match status" value="1"/>
</dbReference>
<dbReference type="Gene3D" id="6.10.250.1820">
    <property type="match status" value="1"/>
</dbReference>
<dbReference type="Gene3D" id="1.25.40.20">
    <property type="entry name" value="Ankyrin repeat-containing domain"/>
    <property type="match status" value="2"/>
</dbReference>
<dbReference type="InterPro" id="IPR002110">
    <property type="entry name" value="Ankyrin_rpt"/>
</dbReference>
<dbReference type="InterPro" id="IPR036770">
    <property type="entry name" value="Ankyrin_rpt-contain_sf"/>
</dbReference>
<dbReference type="InterPro" id="IPR017401">
    <property type="entry name" value="MYPT1/MYPT2/Mbs85"/>
</dbReference>
<dbReference type="InterPro" id="IPR051226">
    <property type="entry name" value="PP1_Regulatory_Subunit"/>
</dbReference>
<dbReference type="InterPro" id="IPR031775">
    <property type="entry name" value="PRKG1_interact"/>
</dbReference>
<dbReference type="PANTHER" id="PTHR24179">
    <property type="entry name" value="PROTEIN PHOSPHATASE 1 REGULATORY SUBUNIT 12"/>
    <property type="match status" value="1"/>
</dbReference>
<dbReference type="PANTHER" id="PTHR24179:SF20">
    <property type="entry name" value="PROTEIN PHOSPHATASE 1 REGULATORY SUBUNIT 12A"/>
    <property type="match status" value="1"/>
</dbReference>
<dbReference type="Pfam" id="PF12796">
    <property type="entry name" value="Ank_2"/>
    <property type="match status" value="2"/>
</dbReference>
<dbReference type="Pfam" id="PF15898">
    <property type="entry name" value="PRKG1_interact"/>
    <property type="match status" value="1"/>
</dbReference>
<dbReference type="PIRSF" id="PIRSF038141">
    <property type="entry name" value="PP1_12ABC_vert"/>
    <property type="match status" value="1"/>
</dbReference>
<dbReference type="PRINTS" id="PR01415">
    <property type="entry name" value="ANKYRIN"/>
</dbReference>
<dbReference type="SMART" id="SM00248">
    <property type="entry name" value="ANK"/>
    <property type="match status" value="6"/>
</dbReference>
<dbReference type="SUPFAM" id="SSF48403">
    <property type="entry name" value="Ankyrin repeat"/>
    <property type="match status" value="1"/>
</dbReference>
<dbReference type="PROSITE" id="PS50297">
    <property type="entry name" value="ANK_REP_REGION"/>
    <property type="match status" value="1"/>
</dbReference>
<dbReference type="PROSITE" id="PS50088">
    <property type="entry name" value="ANK_REPEAT"/>
    <property type="match status" value="4"/>
</dbReference>